<gene>
    <name type="ordered locus">NGR_a02960</name>
    <name type="ORF">y4jS</name>
</gene>
<accession>P55519</accession>
<name>Y4JS_SINFN</name>
<feature type="chain" id="PRO_0000081401" description="Uncharacterized protein y4jS">
    <location>
        <begin position="1"/>
        <end position="413"/>
    </location>
</feature>
<feature type="domain" description="Response regulatory" evidence="1">
    <location>
        <begin position="2"/>
        <end position="129"/>
    </location>
</feature>
<feature type="modified residue" description="4-aspartylphosphate" evidence="1">
    <location>
        <position position="54"/>
    </location>
</feature>
<protein>
    <recommendedName>
        <fullName>Uncharacterized protein y4jS</fullName>
    </recommendedName>
</protein>
<proteinExistence type="inferred from homology"/>
<evidence type="ECO:0000255" key="1">
    <source>
        <dbReference type="PROSITE-ProRule" id="PRU00169"/>
    </source>
</evidence>
<dbReference type="EMBL" id="U00090">
    <property type="protein sequence ID" value="AAB91731.1"/>
    <property type="molecule type" value="Genomic_DNA"/>
</dbReference>
<dbReference type="PIR" id="T28646">
    <property type="entry name" value="T28646"/>
</dbReference>
<dbReference type="RefSeq" id="NP_443929.1">
    <property type="nucleotide sequence ID" value="NC_000914.2"/>
</dbReference>
<dbReference type="RefSeq" id="WP_010875319.1">
    <property type="nucleotide sequence ID" value="NC_000914.2"/>
</dbReference>
<dbReference type="SMR" id="P55519"/>
<dbReference type="KEGG" id="rhi:NGR_a02960"/>
<dbReference type="PATRIC" id="fig|394.7.peg.312"/>
<dbReference type="eggNOG" id="COG0775">
    <property type="taxonomic scope" value="Bacteria"/>
</dbReference>
<dbReference type="eggNOG" id="COG0784">
    <property type="taxonomic scope" value="Bacteria"/>
</dbReference>
<dbReference type="HOGENOM" id="CLU_055125_0_0_5"/>
<dbReference type="OrthoDB" id="2988699at2"/>
<dbReference type="Proteomes" id="UP000001054">
    <property type="component" value="Plasmid pNGR234a"/>
</dbReference>
<dbReference type="GO" id="GO:0005829">
    <property type="term" value="C:cytosol"/>
    <property type="evidence" value="ECO:0007669"/>
    <property type="project" value="TreeGrafter"/>
</dbReference>
<dbReference type="GO" id="GO:0008782">
    <property type="term" value="F:adenosylhomocysteine nucleosidase activity"/>
    <property type="evidence" value="ECO:0007669"/>
    <property type="project" value="TreeGrafter"/>
</dbReference>
<dbReference type="GO" id="GO:0008930">
    <property type="term" value="F:methylthioadenosine nucleosidase activity"/>
    <property type="evidence" value="ECO:0007669"/>
    <property type="project" value="TreeGrafter"/>
</dbReference>
<dbReference type="GO" id="GO:0019284">
    <property type="term" value="P:L-methionine salvage from S-adenosylmethionine"/>
    <property type="evidence" value="ECO:0007669"/>
    <property type="project" value="TreeGrafter"/>
</dbReference>
<dbReference type="GO" id="GO:0009116">
    <property type="term" value="P:nucleoside metabolic process"/>
    <property type="evidence" value="ECO:0007669"/>
    <property type="project" value="InterPro"/>
</dbReference>
<dbReference type="GO" id="GO:0000160">
    <property type="term" value="P:phosphorelay signal transduction system"/>
    <property type="evidence" value="ECO:0007669"/>
    <property type="project" value="UniProtKB-KW"/>
</dbReference>
<dbReference type="Gene3D" id="3.40.50.2300">
    <property type="match status" value="1"/>
</dbReference>
<dbReference type="Gene3D" id="3.40.50.1580">
    <property type="entry name" value="Nucleoside phosphorylase domain"/>
    <property type="match status" value="1"/>
</dbReference>
<dbReference type="InterPro" id="IPR011006">
    <property type="entry name" value="CheY-like_superfamily"/>
</dbReference>
<dbReference type="InterPro" id="IPR000845">
    <property type="entry name" value="Nucleoside_phosphorylase_d"/>
</dbReference>
<dbReference type="InterPro" id="IPR035994">
    <property type="entry name" value="Nucleoside_phosphorylase_sf"/>
</dbReference>
<dbReference type="InterPro" id="IPR001789">
    <property type="entry name" value="Sig_transdc_resp-reg_receiver"/>
</dbReference>
<dbReference type="PANTHER" id="PTHR46832">
    <property type="entry name" value="5'-METHYLTHIOADENOSINE/S-ADENOSYLHOMOCYSTEINE NUCLEOSIDASE"/>
    <property type="match status" value="1"/>
</dbReference>
<dbReference type="PANTHER" id="PTHR46832:SF1">
    <property type="entry name" value="5'-METHYLTHIOADENOSINE_S-ADENOSYLHOMOCYSTEINE NUCLEOSIDASE"/>
    <property type="match status" value="1"/>
</dbReference>
<dbReference type="Pfam" id="PF01048">
    <property type="entry name" value="PNP_UDP_1"/>
    <property type="match status" value="1"/>
</dbReference>
<dbReference type="SMART" id="SM00448">
    <property type="entry name" value="REC"/>
    <property type="match status" value="1"/>
</dbReference>
<dbReference type="SUPFAM" id="SSF52172">
    <property type="entry name" value="CheY-like"/>
    <property type="match status" value="1"/>
</dbReference>
<dbReference type="SUPFAM" id="SSF53167">
    <property type="entry name" value="Purine and uridine phosphorylases"/>
    <property type="match status" value="1"/>
</dbReference>
<dbReference type="PROSITE" id="PS50110">
    <property type="entry name" value="RESPONSE_REGULATORY"/>
    <property type="match status" value="1"/>
</dbReference>
<reference key="1">
    <citation type="journal article" date="1997" name="Nature">
        <title>Molecular basis of symbiosis between Rhizobium and legumes.</title>
        <authorList>
            <person name="Freiberg C.A."/>
            <person name="Fellay R."/>
            <person name="Bairoch A."/>
            <person name="Broughton W.J."/>
            <person name="Rosenthal A."/>
            <person name="Perret X."/>
        </authorList>
    </citation>
    <scope>NUCLEOTIDE SEQUENCE [LARGE SCALE GENOMIC DNA]</scope>
    <source>
        <strain>NBRC 101917 / NGR234</strain>
    </source>
</reference>
<reference key="2">
    <citation type="journal article" date="2009" name="Appl. Environ. Microbiol.">
        <title>Rhizobium sp. strain NGR234 possesses a remarkable number of secretion systems.</title>
        <authorList>
            <person name="Schmeisser C."/>
            <person name="Liesegang H."/>
            <person name="Krysciak D."/>
            <person name="Bakkou N."/>
            <person name="Le Quere A."/>
            <person name="Wollherr A."/>
            <person name="Heinemeyer I."/>
            <person name="Morgenstern B."/>
            <person name="Pommerening-Roeser A."/>
            <person name="Flores M."/>
            <person name="Palacios R."/>
            <person name="Brenner S."/>
            <person name="Gottschalk G."/>
            <person name="Schmitz R.A."/>
            <person name="Broughton W.J."/>
            <person name="Perret X."/>
            <person name="Strittmatter A.W."/>
            <person name="Streit W.R."/>
        </authorList>
    </citation>
    <scope>NUCLEOTIDE SEQUENCE [LARGE SCALE GENOMIC DNA]</scope>
    <source>
        <strain>NBRC 101917 / NGR234</strain>
    </source>
</reference>
<geneLocation type="plasmid">
    <name>sym pNGR234a</name>
</geneLocation>
<sequence length="413" mass="44799">MRILIVDDENTKVVEICGVLRDAQITEESITVATTAASALKELKESYFDLLIIDMYLPNRIGEAPSLSGGVDLLKRINRGNDVQLPEHILGLTSNLEALAASEEDFSARSWFVEEVGPSKTTWKLRLMEKLQYLKAREEYQGNQSKSEIISTRPECEVLFVCALLDPELTALHAVSGCDWEVVTFPGDPGIYWSASLKFGANTVSAICVCLPQMGLVAAGVTAAKAITLFKPKLVVMTGICAGRKGDCDLGDIIGANLTWDYGSGKFTEVAGAVVFEPAPFQAAATARVGGVLAELSNDNELLQKLYKESPGYRPAKVPKFHVAPLASGAAVQNHKEFFSGVVTQQRKMLGVDMEAFAIAWACHEALEPQPSWLVIKSVVDFADGTKDSQIQSFGSYISASLAIYAVDRLINR</sequence>
<organism>
    <name type="scientific">Sinorhizobium fredii (strain NBRC 101917 / NGR234)</name>
    <dbReference type="NCBI Taxonomy" id="394"/>
    <lineage>
        <taxon>Bacteria</taxon>
        <taxon>Pseudomonadati</taxon>
        <taxon>Pseudomonadota</taxon>
        <taxon>Alphaproteobacteria</taxon>
        <taxon>Hyphomicrobiales</taxon>
        <taxon>Rhizobiaceae</taxon>
        <taxon>Sinorhizobium/Ensifer group</taxon>
        <taxon>Sinorhizobium</taxon>
    </lineage>
</organism>
<keyword id="KW-0597">Phosphoprotein</keyword>
<keyword id="KW-0614">Plasmid</keyword>
<keyword id="KW-1185">Reference proteome</keyword>
<keyword id="KW-0902">Two-component regulatory system</keyword>